<evidence type="ECO:0000255" key="1">
    <source>
        <dbReference type="HAMAP-Rule" id="MF_00300"/>
    </source>
</evidence>
<reference key="1">
    <citation type="journal article" date="2008" name="Antimicrob. Agents Chemother.">
        <title>Whole-genome pyrosequencing of an epidemic multidrug-resistant Acinetobacter baumannii strain belonging to the European clone II group.</title>
        <authorList>
            <person name="Iacono M."/>
            <person name="Villa L."/>
            <person name="Fortini D."/>
            <person name="Bordoni R."/>
            <person name="Imperi F."/>
            <person name="Bonnal R.J."/>
            <person name="Sicheritz-Ponten T."/>
            <person name="De Bellis G."/>
            <person name="Visca P."/>
            <person name="Cassone A."/>
            <person name="Carattoli A."/>
        </authorList>
    </citation>
    <scope>NUCLEOTIDE SEQUENCE [LARGE SCALE GENOMIC DNA]</scope>
    <source>
        <strain>ACICU</strain>
    </source>
</reference>
<accession>B2I0B7</accession>
<dbReference type="EC" id="4.2.3.5" evidence="1"/>
<dbReference type="EMBL" id="CP000863">
    <property type="protein sequence ID" value="ACC57042.1"/>
    <property type="molecule type" value="Genomic_DNA"/>
</dbReference>
<dbReference type="RefSeq" id="WP_000918448.1">
    <property type="nucleotide sequence ID" value="NZ_CP031380.1"/>
</dbReference>
<dbReference type="SMR" id="B2I0B7"/>
<dbReference type="KEGG" id="abc:ACICU_01730"/>
<dbReference type="HOGENOM" id="CLU_034547_0_2_6"/>
<dbReference type="UniPathway" id="UPA00053">
    <property type="reaction ID" value="UER00090"/>
</dbReference>
<dbReference type="Proteomes" id="UP000008839">
    <property type="component" value="Chromosome"/>
</dbReference>
<dbReference type="GO" id="GO:0005829">
    <property type="term" value="C:cytosol"/>
    <property type="evidence" value="ECO:0007669"/>
    <property type="project" value="TreeGrafter"/>
</dbReference>
<dbReference type="GO" id="GO:0004107">
    <property type="term" value="F:chorismate synthase activity"/>
    <property type="evidence" value="ECO:0007669"/>
    <property type="project" value="UniProtKB-UniRule"/>
</dbReference>
<dbReference type="GO" id="GO:0010181">
    <property type="term" value="F:FMN binding"/>
    <property type="evidence" value="ECO:0007669"/>
    <property type="project" value="TreeGrafter"/>
</dbReference>
<dbReference type="GO" id="GO:0008652">
    <property type="term" value="P:amino acid biosynthetic process"/>
    <property type="evidence" value="ECO:0007669"/>
    <property type="project" value="UniProtKB-KW"/>
</dbReference>
<dbReference type="GO" id="GO:0009073">
    <property type="term" value="P:aromatic amino acid family biosynthetic process"/>
    <property type="evidence" value="ECO:0007669"/>
    <property type="project" value="UniProtKB-KW"/>
</dbReference>
<dbReference type="GO" id="GO:0009423">
    <property type="term" value="P:chorismate biosynthetic process"/>
    <property type="evidence" value="ECO:0007669"/>
    <property type="project" value="UniProtKB-UniRule"/>
</dbReference>
<dbReference type="CDD" id="cd07304">
    <property type="entry name" value="Chorismate_synthase"/>
    <property type="match status" value="1"/>
</dbReference>
<dbReference type="FunFam" id="3.60.150.10:FF:000001">
    <property type="entry name" value="Chorismate synthase"/>
    <property type="match status" value="1"/>
</dbReference>
<dbReference type="Gene3D" id="3.60.150.10">
    <property type="entry name" value="Chorismate synthase AroC"/>
    <property type="match status" value="1"/>
</dbReference>
<dbReference type="HAMAP" id="MF_00300">
    <property type="entry name" value="Chorismate_synth"/>
    <property type="match status" value="1"/>
</dbReference>
<dbReference type="InterPro" id="IPR000453">
    <property type="entry name" value="Chorismate_synth"/>
</dbReference>
<dbReference type="InterPro" id="IPR035904">
    <property type="entry name" value="Chorismate_synth_AroC_sf"/>
</dbReference>
<dbReference type="InterPro" id="IPR020541">
    <property type="entry name" value="Chorismate_synthase_CS"/>
</dbReference>
<dbReference type="NCBIfam" id="TIGR00033">
    <property type="entry name" value="aroC"/>
    <property type="match status" value="1"/>
</dbReference>
<dbReference type="NCBIfam" id="NF003793">
    <property type="entry name" value="PRK05382.1"/>
    <property type="match status" value="1"/>
</dbReference>
<dbReference type="PANTHER" id="PTHR21085">
    <property type="entry name" value="CHORISMATE SYNTHASE"/>
    <property type="match status" value="1"/>
</dbReference>
<dbReference type="PANTHER" id="PTHR21085:SF0">
    <property type="entry name" value="CHORISMATE SYNTHASE"/>
    <property type="match status" value="1"/>
</dbReference>
<dbReference type="Pfam" id="PF01264">
    <property type="entry name" value="Chorismate_synt"/>
    <property type="match status" value="1"/>
</dbReference>
<dbReference type="PIRSF" id="PIRSF001456">
    <property type="entry name" value="Chorismate_synth"/>
    <property type="match status" value="1"/>
</dbReference>
<dbReference type="SUPFAM" id="SSF103263">
    <property type="entry name" value="Chorismate synthase, AroC"/>
    <property type="match status" value="1"/>
</dbReference>
<dbReference type="PROSITE" id="PS00787">
    <property type="entry name" value="CHORISMATE_SYNTHASE_1"/>
    <property type="match status" value="1"/>
</dbReference>
<dbReference type="PROSITE" id="PS00788">
    <property type="entry name" value="CHORISMATE_SYNTHASE_2"/>
    <property type="match status" value="1"/>
</dbReference>
<dbReference type="PROSITE" id="PS00789">
    <property type="entry name" value="CHORISMATE_SYNTHASE_3"/>
    <property type="match status" value="1"/>
</dbReference>
<protein>
    <recommendedName>
        <fullName evidence="1">Chorismate synthase</fullName>
        <shortName evidence="1">CS</shortName>
        <ecNumber evidence="1">4.2.3.5</ecNumber>
    </recommendedName>
    <alternativeName>
        <fullName evidence="1">5-enolpyruvylshikimate-3-phosphate phospholyase</fullName>
    </alternativeName>
</protein>
<proteinExistence type="inferred from homology"/>
<name>AROC_ACIBC</name>
<gene>
    <name evidence="1" type="primary">aroC</name>
    <name type="ordered locus">ACICU_01730</name>
</gene>
<sequence length="363" mass="38987">MAGNSIGQLFRVTTCGESHGVGLMAIVDGVPPGLALTEEDLQKDLDRRKPGTSKFATQRKEPDQVEIISGVFEGKTTGTPIGLLIRNTDQKSKDYGNIAQTFRPGHADYTYTQKYGFRDYRGGGRSSARETAMRVAAGAIAKKYLAEKFGVVIRGHVTQIGNEVAEKLDWNEVPNNPFFCGDVDAVPRFEALVTSLREQGTSCGAKLEILAEKVPVGWGEPVFDRLDADIAHAMMSINAVKGVEIGDGFAVAGQFGHETRDELTSHGFLANHAGGILGGISSGQTIRVAIALKPTASITTPGKTINLNREDTDVLTKGRHDPCVGVRATPIAEAMLAIVLMDHFLRHRAQNADVVPPFAPIEP</sequence>
<organism>
    <name type="scientific">Acinetobacter baumannii (strain ACICU)</name>
    <dbReference type="NCBI Taxonomy" id="405416"/>
    <lineage>
        <taxon>Bacteria</taxon>
        <taxon>Pseudomonadati</taxon>
        <taxon>Pseudomonadota</taxon>
        <taxon>Gammaproteobacteria</taxon>
        <taxon>Moraxellales</taxon>
        <taxon>Moraxellaceae</taxon>
        <taxon>Acinetobacter</taxon>
        <taxon>Acinetobacter calcoaceticus/baumannii complex</taxon>
    </lineage>
</organism>
<comment type="function">
    <text evidence="1">Catalyzes the anti-1,4-elimination of the C-3 phosphate and the C-6 proR hydrogen from 5-enolpyruvylshikimate-3-phosphate (EPSP) to yield chorismate, which is the branch point compound that serves as the starting substrate for the three terminal pathways of aromatic amino acid biosynthesis. This reaction introduces a second double bond into the aromatic ring system.</text>
</comment>
<comment type="catalytic activity">
    <reaction evidence="1">
        <text>5-O-(1-carboxyvinyl)-3-phosphoshikimate = chorismate + phosphate</text>
        <dbReference type="Rhea" id="RHEA:21020"/>
        <dbReference type="ChEBI" id="CHEBI:29748"/>
        <dbReference type="ChEBI" id="CHEBI:43474"/>
        <dbReference type="ChEBI" id="CHEBI:57701"/>
        <dbReference type="EC" id="4.2.3.5"/>
    </reaction>
</comment>
<comment type="cofactor">
    <cofactor evidence="1">
        <name>FMNH2</name>
        <dbReference type="ChEBI" id="CHEBI:57618"/>
    </cofactor>
    <text evidence="1">Reduced FMN (FMNH(2)).</text>
</comment>
<comment type="pathway">
    <text evidence="1">Metabolic intermediate biosynthesis; chorismate biosynthesis; chorismate from D-erythrose 4-phosphate and phosphoenolpyruvate: step 7/7.</text>
</comment>
<comment type="subunit">
    <text evidence="1">Homotetramer.</text>
</comment>
<comment type="similarity">
    <text evidence="1">Belongs to the chorismate synthase family.</text>
</comment>
<feature type="chain" id="PRO_1000115318" description="Chorismate synthase">
    <location>
        <begin position="1"/>
        <end position="363"/>
    </location>
</feature>
<feature type="binding site" evidence="1">
    <location>
        <position position="48"/>
    </location>
    <ligand>
        <name>NADP(+)</name>
        <dbReference type="ChEBI" id="CHEBI:58349"/>
    </ligand>
</feature>
<feature type="binding site" evidence="1">
    <location>
        <begin position="125"/>
        <end position="127"/>
    </location>
    <ligand>
        <name>FMN</name>
        <dbReference type="ChEBI" id="CHEBI:58210"/>
    </ligand>
</feature>
<feature type="binding site" evidence="1">
    <location>
        <begin position="238"/>
        <end position="239"/>
    </location>
    <ligand>
        <name>FMN</name>
        <dbReference type="ChEBI" id="CHEBI:58210"/>
    </ligand>
</feature>
<feature type="binding site" evidence="1">
    <location>
        <position position="278"/>
    </location>
    <ligand>
        <name>FMN</name>
        <dbReference type="ChEBI" id="CHEBI:58210"/>
    </ligand>
</feature>
<feature type="binding site" evidence="1">
    <location>
        <begin position="293"/>
        <end position="297"/>
    </location>
    <ligand>
        <name>FMN</name>
        <dbReference type="ChEBI" id="CHEBI:58210"/>
    </ligand>
</feature>
<feature type="binding site" evidence="1">
    <location>
        <position position="319"/>
    </location>
    <ligand>
        <name>FMN</name>
        <dbReference type="ChEBI" id="CHEBI:58210"/>
    </ligand>
</feature>
<keyword id="KW-0028">Amino-acid biosynthesis</keyword>
<keyword id="KW-0057">Aromatic amino acid biosynthesis</keyword>
<keyword id="KW-0274">FAD</keyword>
<keyword id="KW-0285">Flavoprotein</keyword>
<keyword id="KW-0288">FMN</keyword>
<keyword id="KW-0456">Lyase</keyword>
<keyword id="KW-0521">NADP</keyword>